<keyword id="KW-1185">Reference proteome</keyword>
<keyword id="KW-0687">Ribonucleoprotein</keyword>
<keyword id="KW-0689">Ribosomal protein</keyword>
<keyword id="KW-0694">RNA-binding</keyword>
<keyword id="KW-0699">rRNA-binding</keyword>
<sequence length="133" mass="14839">MHFDPVADIITKINNANRAKIVELQTEASKLKVAILNILLNEGYIRGYEIYDNKEKTKSILKIKLKFDENRVSSLNGIKQISKPGLRIYVSAEKLPKVLNGLGIAIVSTNEGLMTDKLARAKKIGGEVLAYVW</sequence>
<accession>O52346</accession>
<reference key="1">
    <citation type="journal article" date="2000" name="Mol. Biol. (Mosk.)">
        <title>Determination and analysis of the nucleotide sequence of a segment of a Mycoplasma gallisepticum strain A5969 chromosome, containing operons S10 and rrn23-5.</title>
        <authorList>
            <person name="Skamrov A.V."/>
            <person name="Gol'dman M.A."/>
            <person name="Feoktistova E.S."/>
            <person name="Bibilashvili R.S."/>
        </authorList>
    </citation>
    <scope>NUCLEOTIDE SEQUENCE [GENOMIC DNA]</scope>
    <source>
        <strain>A5969Var.B</strain>
    </source>
</reference>
<reference key="2">
    <citation type="journal article" date="2003" name="Microbiology">
        <title>The complete genome sequence of the avian pathogen Mycoplasma gallisepticum strain R(low).</title>
        <authorList>
            <person name="Papazisi L."/>
            <person name="Gorton T.S."/>
            <person name="Kutish G."/>
            <person name="Markham P.F."/>
            <person name="Browning G.F."/>
            <person name="Nguyen D.K."/>
            <person name="Swartzell S."/>
            <person name="Madan A."/>
            <person name="Mahairas G."/>
            <person name="Geary S.J."/>
        </authorList>
    </citation>
    <scope>NUCLEOTIDE SEQUENCE [LARGE SCALE GENOMIC DNA]</scope>
    <source>
        <strain>R(low / passage 15 / clone 2)</strain>
    </source>
</reference>
<gene>
    <name evidence="1" type="primary">rpsH</name>
    <name evidence="1" type="synonym">rps8</name>
    <name type="ordered locus">MYCGA0650</name>
    <name type="ORF">MGA_0733</name>
</gene>
<name>RS8_MYCGA</name>
<evidence type="ECO:0000255" key="1">
    <source>
        <dbReference type="HAMAP-Rule" id="MF_01302"/>
    </source>
</evidence>
<evidence type="ECO:0000305" key="2"/>
<protein>
    <recommendedName>
        <fullName evidence="1">Small ribosomal subunit protein uS8</fullName>
    </recommendedName>
    <alternativeName>
        <fullName evidence="2">30S ribosomal protein S8</fullName>
    </alternativeName>
</protein>
<comment type="function">
    <text evidence="1">One of the primary rRNA binding proteins, it binds directly to 16S rRNA central domain where it helps coordinate assembly of the platform of the 30S subunit.</text>
</comment>
<comment type="subunit">
    <text evidence="1">Part of the 30S ribosomal subunit. Contacts proteins S5 and S12.</text>
</comment>
<comment type="similarity">
    <text evidence="1">Belongs to the universal ribosomal protein uS8 family.</text>
</comment>
<dbReference type="EMBL" id="AF036708">
    <property type="protein sequence ID" value="AAB95401.1"/>
    <property type="molecule type" value="Genomic_DNA"/>
</dbReference>
<dbReference type="EMBL" id="AE015450">
    <property type="protein sequence ID" value="AAP56415.1"/>
    <property type="molecule type" value="Genomic_DNA"/>
</dbReference>
<dbReference type="RefSeq" id="WP_011113294.1">
    <property type="nucleotide sequence ID" value="NC_004829.2"/>
</dbReference>
<dbReference type="SMR" id="O52346"/>
<dbReference type="GeneID" id="93509883"/>
<dbReference type="KEGG" id="mga:MGA_0733"/>
<dbReference type="PATRIC" id="fig|233150.7.peg.69"/>
<dbReference type="HOGENOM" id="CLU_098428_0_2_14"/>
<dbReference type="OrthoDB" id="9802617at2"/>
<dbReference type="Proteomes" id="UP000001418">
    <property type="component" value="Chromosome"/>
</dbReference>
<dbReference type="GO" id="GO:1990904">
    <property type="term" value="C:ribonucleoprotein complex"/>
    <property type="evidence" value="ECO:0007669"/>
    <property type="project" value="UniProtKB-KW"/>
</dbReference>
<dbReference type="GO" id="GO:0005840">
    <property type="term" value="C:ribosome"/>
    <property type="evidence" value="ECO:0007669"/>
    <property type="project" value="UniProtKB-KW"/>
</dbReference>
<dbReference type="GO" id="GO:0019843">
    <property type="term" value="F:rRNA binding"/>
    <property type="evidence" value="ECO:0007669"/>
    <property type="project" value="UniProtKB-UniRule"/>
</dbReference>
<dbReference type="GO" id="GO:0003735">
    <property type="term" value="F:structural constituent of ribosome"/>
    <property type="evidence" value="ECO:0007669"/>
    <property type="project" value="InterPro"/>
</dbReference>
<dbReference type="GO" id="GO:0006412">
    <property type="term" value="P:translation"/>
    <property type="evidence" value="ECO:0007669"/>
    <property type="project" value="UniProtKB-UniRule"/>
</dbReference>
<dbReference type="FunFam" id="3.30.1490.10:FF:000001">
    <property type="entry name" value="30S ribosomal protein S8"/>
    <property type="match status" value="1"/>
</dbReference>
<dbReference type="Gene3D" id="3.30.1370.30">
    <property type="match status" value="1"/>
</dbReference>
<dbReference type="Gene3D" id="3.30.1490.10">
    <property type="match status" value="1"/>
</dbReference>
<dbReference type="HAMAP" id="MF_01302_B">
    <property type="entry name" value="Ribosomal_uS8_B"/>
    <property type="match status" value="1"/>
</dbReference>
<dbReference type="InterPro" id="IPR000630">
    <property type="entry name" value="Ribosomal_uS8"/>
</dbReference>
<dbReference type="InterPro" id="IPR047863">
    <property type="entry name" value="Ribosomal_uS8_CS"/>
</dbReference>
<dbReference type="InterPro" id="IPR035987">
    <property type="entry name" value="Ribosomal_uS8_sf"/>
</dbReference>
<dbReference type="NCBIfam" id="NF001109">
    <property type="entry name" value="PRK00136.1"/>
    <property type="match status" value="1"/>
</dbReference>
<dbReference type="PANTHER" id="PTHR11758">
    <property type="entry name" value="40S RIBOSOMAL PROTEIN S15A"/>
    <property type="match status" value="1"/>
</dbReference>
<dbReference type="Pfam" id="PF00410">
    <property type="entry name" value="Ribosomal_S8"/>
    <property type="match status" value="1"/>
</dbReference>
<dbReference type="SUPFAM" id="SSF56047">
    <property type="entry name" value="Ribosomal protein S8"/>
    <property type="match status" value="1"/>
</dbReference>
<dbReference type="PROSITE" id="PS00053">
    <property type="entry name" value="RIBOSOMAL_S8"/>
    <property type="match status" value="1"/>
</dbReference>
<proteinExistence type="inferred from homology"/>
<organism>
    <name type="scientific">Mycoplasmoides gallisepticum (strain R(low / passage 15 / clone 2))</name>
    <name type="common">Mycoplasma gallisepticum</name>
    <dbReference type="NCBI Taxonomy" id="710127"/>
    <lineage>
        <taxon>Bacteria</taxon>
        <taxon>Bacillati</taxon>
        <taxon>Mycoplasmatota</taxon>
        <taxon>Mycoplasmoidales</taxon>
        <taxon>Mycoplasmoidaceae</taxon>
        <taxon>Mycoplasmoides</taxon>
    </lineage>
</organism>
<feature type="chain" id="PRO_0000126438" description="Small ribosomal subunit protein uS8">
    <location>
        <begin position="1"/>
        <end position="133"/>
    </location>
</feature>